<proteinExistence type="inferred from homology"/>
<comment type="similarity">
    <text evidence="1">Belongs to the universal ribosomal protein uS2 family.</text>
</comment>
<organism>
    <name type="scientific">Streptococcus pneumoniae serotype 4 (strain ATCC BAA-334 / TIGR4)</name>
    <dbReference type="NCBI Taxonomy" id="170187"/>
    <lineage>
        <taxon>Bacteria</taxon>
        <taxon>Bacillati</taxon>
        <taxon>Bacillota</taxon>
        <taxon>Bacilli</taxon>
        <taxon>Lactobacillales</taxon>
        <taxon>Streptococcaceae</taxon>
        <taxon>Streptococcus</taxon>
    </lineage>
</organism>
<reference key="1">
    <citation type="journal article" date="2001" name="Science">
        <title>Complete genome sequence of a virulent isolate of Streptococcus pneumoniae.</title>
        <authorList>
            <person name="Tettelin H."/>
            <person name="Nelson K.E."/>
            <person name="Paulsen I.T."/>
            <person name="Eisen J.A."/>
            <person name="Read T.D."/>
            <person name="Peterson S.N."/>
            <person name="Heidelberg J.F."/>
            <person name="DeBoy R.T."/>
            <person name="Haft D.H."/>
            <person name="Dodson R.J."/>
            <person name="Durkin A.S."/>
            <person name="Gwinn M.L."/>
            <person name="Kolonay J.F."/>
            <person name="Nelson W.C."/>
            <person name="Peterson J.D."/>
            <person name="Umayam L.A."/>
            <person name="White O."/>
            <person name="Salzberg S.L."/>
            <person name="Lewis M.R."/>
            <person name="Radune D."/>
            <person name="Holtzapple E.K."/>
            <person name="Khouri H.M."/>
            <person name="Wolf A.M."/>
            <person name="Utterback T.R."/>
            <person name="Hansen C.L."/>
            <person name="McDonald L.A."/>
            <person name="Feldblyum T.V."/>
            <person name="Angiuoli S.V."/>
            <person name="Dickinson T."/>
            <person name="Hickey E.K."/>
            <person name="Holt I.E."/>
            <person name="Loftus B.J."/>
            <person name="Yang F."/>
            <person name="Smith H.O."/>
            <person name="Venter J.C."/>
            <person name="Dougherty B.A."/>
            <person name="Morrison D.A."/>
            <person name="Hollingshead S.K."/>
            <person name="Fraser C.M."/>
        </authorList>
    </citation>
    <scope>NUCLEOTIDE SEQUENCE [LARGE SCALE GENOMIC DNA]</scope>
    <source>
        <strain>ATCC BAA-334 / TIGR4</strain>
    </source>
</reference>
<dbReference type="EMBL" id="AE005672">
    <property type="protein sequence ID" value="AAK76263.1"/>
    <property type="molecule type" value="Genomic_DNA"/>
</dbReference>
<dbReference type="PIR" id="F95258">
    <property type="entry name" value="F95258"/>
</dbReference>
<dbReference type="RefSeq" id="WP_000268465.1">
    <property type="nucleotide sequence ID" value="NZ_CP155539.1"/>
</dbReference>
<dbReference type="SMR" id="Q97N56"/>
<dbReference type="PaxDb" id="170187-SP_2215"/>
<dbReference type="EnsemblBacteria" id="AAK76263">
    <property type="protein sequence ID" value="AAK76263"/>
    <property type="gene ID" value="SP_2215"/>
</dbReference>
<dbReference type="KEGG" id="spn:SP_2215"/>
<dbReference type="eggNOG" id="COG0052">
    <property type="taxonomic scope" value="Bacteria"/>
</dbReference>
<dbReference type="PhylomeDB" id="Q97N56"/>
<dbReference type="BioCyc" id="SPNE170187:G1FZB-2315-MONOMER"/>
<dbReference type="Proteomes" id="UP000000585">
    <property type="component" value="Chromosome"/>
</dbReference>
<dbReference type="GO" id="GO:0022627">
    <property type="term" value="C:cytosolic small ribosomal subunit"/>
    <property type="evidence" value="ECO:0007669"/>
    <property type="project" value="TreeGrafter"/>
</dbReference>
<dbReference type="GO" id="GO:0003735">
    <property type="term" value="F:structural constituent of ribosome"/>
    <property type="evidence" value="ECO:0007669"/>
    <property type="project" value="InterPro"/>
</dbReference>
<dbReference type="GO" id="GO:0006412">
    <property type="term" value="P:translation"/>
    <property type="evidence" value="ECO:0007669"/>
    <property type="project" value="UniProtKB-UniRule"/>
</dbReference>
<dbReference type="CDD" id="cd01425">
    <property type="entry name" value="RPS2"/>
    <property type="match status" value="1"/>
</dbReference>
<dbReference type="FunFam" id="1.10.287.610:FF:000001">
    <property type="entry name" value="30S ribosomal protein S2"/>
    <property type="match status" value="1"/>
</dbReference>
<dbReference type="Gene3D" id="3.40.50.10490">
    <property type="entry name" value="Glucose-6-phosphate isomerase like protein, domain 1"/>
    <property type="match status" value="1"/>
</dbReference>
<dbReference type="Gene3D" id="1.10.287.610">
    <property type="entry name" value="Helix hairpin bin"/>
    <property type="match status" value="1"/>
</dbReference>
<dbReference type="HAMAP" id="MF_00291_B">
    <property type="entry name" value="Ribosomal_uS2_B"/>
    <property type="match status" value="1"/>
</dbReference>
<dbReference type="InterPro" id="IPR001865">
    <property type="entry name" value="Ribosomal_uS2"/>
</dbReference>
<dbReference type="InterPro" id="IPR005706">
    <property type="entry name" value="Ribosomal_uS2_bac/mit/plastid"/>
</dbReference>
<dbReference type="InterPro" id="IPR018130">
    <property type="entry name" value="Ribosomal_uS2_CS"/>
</dbReference>
<dbReference type="InterPro" id="IPR023591">
    <property type="entry name" value="Ribosomal_uS2_flav_dom_sf"/>
</dbReference>
<dbReference type="NCBIfam" id="TIGR01011">
    <property type="entry name" value="rpsB_bact"/>
    <property type="match status" value="1"/>
</dbReference>
<dbReference type="PANTHER" id="PTHR12534">
    <property type="entry name" value="30S RIBOSOMAL PROTEIN S2 PROKARYOTIC AND ORGANELLAR"/>
    <property type="match status" value="1"/>
</dbReference>
<dbReference type="PANTHER" id="PTHR12534:SF0">
    <property type="entry name" value="SMALL RIBOSOMAL SUBUNIT PROTEIN US2M"/>
    <property type="match status" value="1"/>
</dbReference>
<dbReference type="Pfam" id="PF00318">
    <property type="entry name" value="Ribosomal_S2"/>
    <property type="match status" value="1"/>
</dbReference>
<dbReference type="PRINTS" id="PR00395">
    <property type="entry name" value="RIBOSOMALS2"/>
</dbReference>
<dbReference type="SUPFAM" id="SSF52313">
    <property type="entry name" value="Ribosomal protein S2"/>
    <property type="match status" value="1"/>
</dbReference>
<dbReference type="PROSITE" id="PS00962">
    <property type="entry name" value="RIBOSOMAL_S2_1"/>
    <property type="match status" value="1"/>
</dbReference>
<sequence length="259" mass="28867">MAVISMKQLLEAGVHFGHQTRRWNPKMAKYIFTERNGIHVIDLQQTVKYADQAYDFMRDAAANDAVVLFVGTKKQAADAVAEEAVRSGQYFINHRWLGGTLTNWGTIQKRIARLKEIKRMEEDGTFEVLPKKEVALLNKQRARLEKFLGGIEDMPRIPDVMYVVDPHKEQIAVKEAKKLGIPVVAMVDTNTDPDDIDVIIPANDDAIRAVKLITAKLADAIIEGRQGEDAVAVEAEFAALETQADSIEEIVEVVEGDNA</sequence>
<protein>
    <recommendedName>
        <fullName evidence="1">Small ribosomal subunit protein uS2</fullName>
    </recommendedName>
    <alternativeName>
        <fullName evidence="2">30S ribosomal protein S2</fullName>
    </alternativeName>
</protein>
<feature type="chain" id="PRO_0000134251" description="Small ribosomal subunit protein uS2">
    <location>
        <begin position="1"/>
        <end position="259"/>
    </location>
</feature>
<keyword id="KW-1185">Reference proteome</keyword>
<keyword id="KW-0687">Ribonucleoprotein</keyword>
<keyword id="KW-0689">Ribosomal protein</keyword>
<evidence type="ECO:0000255" key="1">
    <source>
        <dbReference type="HAMAP-Rule" id="MF_00291"/>
    </source>
</evidence>
<evidence type="ECO:0000305" key="2"/>
<name>RS2_STRPN</name>
<accession>Q97N56</accession>
<gene>
    <name evidence="1" type="primary">rpsB</name>
    <name type="ordered locus">SP_2215</name>
</gene>